<protein>
    <recommendedName>
        <fullName>Protein MGF 505-10R</fullName>
    </recommendedName>
</protein>
<evidence type="ECO:0000250" key="1">
    <source>
        <dbReference type="UniProtKB" id="Q89869"/>
    </source>
</evidence>
<evidence type="ECO:0000305" key="2"/>
<dbReference type="EMBL" id="AY261360">
    <property type="status" value="NOT_ANNOTATED_CDS"/>
    <property type="molecule type" value="Genomic_DNA"/>
</dbReference>
<dbReference type="SMR" id="P0C9V0"/>
<dbReference type="Proteomes" id="UP000000861">
    <property type="component" value="Segment"/>
</dbReference>
<dbReference type="InterPro" id="IPR004858">
    <property type="entry name" value="MGF_505"/>
</dbReference>
<dbReference type="Pfam" id="PF03158">
    <property type="entry name" value="DUF249"/>
    <property type="match status" value="1"/>
</dbReference>
<reference key="1">
    <citation type="submission" date="2003-03" db="EMBL/GenBank/DDBJ databases">
        <title>African swine fever virus genomes.</title>
        <authorList>
            <person name="Kutish G.F."/>
            <person name="Rock D.L."/>
        </authorList>
    </citation>
    <scope>NUCLEOTIDE SEQUENCE [LARGE SCALE GENOMIC DNA]</scope>
</reference>
<accession>P0C9V0</accession>
<name>50510_ASFK5</name>
<comment type="function">
    <text evidence="1">Plays a role in virus cell tropism, and may be required for efficient virus replication in macrophages.</text>
</comment>
<comment type="induction">
    <text evidence="2">Expressed in the early phase of the viral replicative cycle.</text>
</comment>
<comment type="similarity">
    <text evidence="2">Belongs to the asfivirus MGF 505 family.</text>
</comment>
<sequence length="541" mass="63144">MFSLQELCRKNIYILPYSLGKHVLQHLGLYWEKHGSLQRIGDDYVLLQQDLIFSVNEALRMAAEEGNNEVVKLLLLWEGNLHYAIIGALEGNRYDLIHKYYDQIGDCHKILPLIQDPQIFEKCHELSTSCNIRCLLEHAVKHNMLSILQKHKDQIRLHLALIQVLFELACREHKNDIVRWIGYSLYIHHLETIFDVALLHKNLSLYVLGYELLMHKVNTEAANIDVSDLLTQHLRSAAAGGLLHFMLETLKYGGCVDKTVLFAAISYKHRKIVAHFIHQVPRKTVEELLLHAVQTRAPKKTLNLLLSSLNYSVHTIIKQLVRSVAIYRSTLVVKLLLMRRKKKLNLIDAVLARLVKYCTYTDIVKFIREFSVSPERVIKMAARESRTFLIEMISKAAWRNDPQTMIHHLKQLTYTMKPESGKDLLIYMIHYIYQTSNLLVAEEEKNIFKLATFYAKHNSVNRFKQICEDYYALDVDARFKTLILECFEIAVQKNYPRIASIVDDFIRFLFYKGDITKEEISEAYSLKNAELYVDLKWLQQE</sequence>
<feature type="chain" id="PRO_0000373350" description="Protein MGF 505-10R">
    <location>
        <begin position="1"/>
        <end position="541"/>
    </location>
</feature>
<organismHost>
    <name type="scientific">Ornithodoros</name>
    <name type="common">relapsing fever ticks</name>
    <dbReference type="NCBI Taxonomy" id="6937"/>
</organismHost>
<organismHost>
    <name type="scientific">Phacochoerus aethiopicus</name>
    <name type="common">Warthog</name>
    <dbReference type="NCBI Taxonomy" id="85517"/>
</organismHost>
<organismHost>
    <name type="scientific">Phacochoerus africanus</name>
    <name type="common">Warthog</name>
    <dbReference type="NCBI Taxonomy" id="41426"/>
</organismHost>
<organismHost>
    <name type="scientific">Potamochoerus larvatus</name>
    <name type="common">Bushpig</name>
    <dbReference type="NCBI Taxonomy" id="273792"/>
</organismHost>
<organismHost>
    <name type="scientific">Sus scrofa</name>
    <name type="common">Pig</name>
    <dbReference type="NCBI Taxonomy" id="9823"/>
</organismHost>
<gene>
    <name type="ordered locus">Ken-045</name>
</gene>
<organism>
    <name type="scientific">African swine fever virus (isolate Pig/Kenya/KEN-50/1950)</name>
    <name type="common">ASFV</name>
    <dbReference type="NCBI Taxonomy" id="561445"/>
    <lineage>
        <taxon>Viruses</taxon>
        <taxon>Varidnaviria</taxon>
        <taxon>Bamfordvirae</taxon>
        <taxon>Nucleocytoviricota</taxon>
        <taxon>Pokkesviricetes</taxon>
        <taxon>Asfuvirales</taxon>
        <taxon>Asfarviridae</taxon>
        <taxon>Asfivirus</taxon>
        <taxon>African swine fever virus</taxon>
    </lineage>
</organism>
<keyword id="KW-0244">Early protein</keyword>
<proteinExistence type="inferred from homology"/>